<name>CRTM_STAAW</name>
<reference key="1">
    <citation type="journal article" date="2002" name="Lancet">
        <title>Genome and virulence determinants of high virulence community-acquired MRSA.</title>
        <authorList>
            <person name="Baba T."/>
            <person name="Takeuchi F."/>
            <person name="Kuroda M."/>
            <person name="Yuzawa H."/>
            <person name="Aoki K."/>
            <person name="Oguchi A."/>
            <person name="Nagai Y."/>
            <person name="Iwama N."/>
            <person name="Asano K."/>
            <person name="Naimi T."/>
            <person name="Kuroda H."/>
            <person name="Cui L."/>
            <person name="Yamamoto K."/>
            <person name="Hiramatsu K."/>
        </authorList>
    </citation>
    <scope>NUCLEOTIDE SEQUENCE [LARGE SCALE GENOMIC DNA]</scope>
    <source>
        <strain>MW2</strain>
    </source>
</reference>
<feature type="chain" id="PRO_0000282623" description="4,4'-diapophytoene synthase">
    <location>
        <begin position="1"/>
        <end position="287"/>
    </location>
</feature>
<feature type="binding site" evidence="1">
    <location>
        <begin position="18"/>
        <end position="21"/>
    </location>
    <ligand>
        <name>(2E,6E)-farnesyl diphosphate</name>
        <dbReference type="ChEBI" id="CHEBI:175763"/>
        <label>1</label>
    </ligand>
</feature>
<feature type="binding site" evidence="1">
    <location>
        <position position="41"/>
    </location>
    <ligand>
        <name>(2E,6E)-farnesyl diphosphate</name>
        <dbReference type="ChEBI" id="CHEBI:175763"/>
        <label>1</label>
    </ligand>
</feature>
<feature type="binding site" evidence="1">
    <location>
        <position position="45"/>
    </location>
    <ligand>
        <name>(2E,6E)-farnesyl diphosphate</name>
        <dbReference type="ChEBI" id="CHEBI:175763"/>
        <label>1</label>
    </ligand>
</feature>
<feature type="binding site" evidence="1">
    <location>
        <position position="45"/>
    </location>
    <ligand>
        <name>(2E,6E)-farnesyl diphosphate</name>
        <dbReference type="ChEBI" id="CHEBI:175763"/>
        <label>2</label>
    </ligand>
</feature>
<feature type="binding site" evidence="1">
    <location>
        <position position="48"/>
    </location>
    <ligand>
        <name>Mg(2+)</name>
        <dbReference type="ChEBI" id="CHEBI:18420"/>
        <label>1</label>
    </ligand>
</feature>
<feature type="binding site" evidence="1">
    <location>
        <position position="52"/>
    </location>
    <ligand>
        <name>Mg(2+)</name>
        <dbReference type="ChEBI" id="CHEBI:18420"/>
        <label>1</label>
    </ligand>
</feature>
<feature type="binding site" evidence="1">
    <location>
        <position position="165"/>
    </location>
    <ligand>
        <name>(2E,6E)-farnesyl diphosphate</name>
        <dbReference type="ChEBI" id="CHEBI:175763"/>
        <label>2</label>
    </ligand>
</feature>
<feature type="binding site" evidence="1">
    <location>
        <position position="168"/>
    </location>
    <ligand>
        <name>Mg(2+)</name>
        <dbReference type="ChEBI" id="CHEBI:18420"/>
        <label>2</label>
    </ligand>
</feature>
<feature type="binding site" evidence="1">
    <location>
        <position position="171"/>
    </location>
    <ligand>
        <name>(2E,6E)-farnesyl diphosphate</name>
        <dbReference type="ChEBI" id="CHEBI:175763"/>
        <label>1</label>
    </ligand>
</feature>
<feature type="binding site" evidence="1">
    <location>
        <position position="172"/>
    </location>
    <ligand>
        <name>Mg(2+)</name>
        <dbReference type="ChEBI" id="CHEBI:18420"/>
        <label>2</label>
    </ligand>
</feature>
<feature type="binding site" evidence="1">
    <location>
        <position position="248"/>
    </location>
    <ligand>
        <name>(2E,6E)-farnesyl diphosphate</name>
        <dbReference type="ChEBI" id="CHEBI:175763"/>
        <label>1</label>
    </ligand>
</feature>
<comment type="function">
    <text evidence="2">Involved in the biosynthesis of the yellow-orange carotenoid staphyloxanthin, which plays a role in the virulence via its protective function against oxidative stress. Catalyzes the head-to-head condensation of two molecules of farnesyl diphosphate (FPP) into the colorless C(30) carotenoid 4,4'-diapophytoene (dehydrosqualene).</text>
</comment>
<comment type="catalytic activity">
    <reaction evidence="2">
        <text>2 (2E,6E)-farnesyl diphosphate = 15-cis-4,4'-diapophytoene + 2 diphosphate</text>
        <dbReference type="Rhea" id="RHEA:31547"/>
        <dbReference type="ChEBI" id="CHEBI:33019"/>
        <dbReference type="ChEBI" id="CHEBI:62738"/>
        <dbReference type="ChEBI" id="CHEBI:175763"/>
        <dbReference type="EC" id="2.5.1.96"/>
    </reaction>
</comment>
<comment type="cofactor">
    <cofactor evidence="1">
        <name>Mg(2+)</name>
        <dbReference type="ChEBI" id="CHEBI:18420"/>
    </cofactor>
    <text evidence="1">Binds 2 Mg(2+) ions per subunit.</text>
</comment>
<comment type="pathway">
    <text evidence="2">Carotenoid biosynthesis; staphyloxanthin biosynthesis; staphyloxanthin from farnesyl diphosphate: step 1/5.</text>
</comment>
<comment type="similarity">
    <text evidence="3">Belongs to the phytoene/squalene synthase family. CrtM subfamily.</text>
</comment>
<proteinExistence type="inferred from homology"/>
<keyword id="KW-0125">Carotenoid biosynthesis</keyword>
<keyword id="KW-0460">Magnesium</keyword>
<keyword id="KW-0479">Metal-binding</keyword>
<keyword id="KW-0808">Transferase</keyword>
<keyword id="KW-0843">Virulence</keyword>
<gene>
    <name type="primary">crtM</name>
    <name type="ordered locus">MW2483</name>
</gene>
<protein>
    <recommendedName>
        <fullName evidence="2">4,4'-diapophytoene synthase</fullName>
        <shortName evidence="2">DAP synthase</shortName>
        <ecNumber evidence="2">2.5.1.96</ecNumber>
    </recommendedName>
    <alternativeName>
        <fullName evidence="2">C30 carotenoid synthase</fullName>
    </alternativeName>
    <alternativeName>
        <fullName evidence="2">Dehydrosqualene synthase</fullName>
    </alternativeName>
</protein>
<accession>Q8NUQ5</accession>
<sequence>MTMMDMNFKYCHKIMKKHSKSFSYAFDLLPEDQRKAVWAIYAVCRKIDDSIDVYGDIQFLNQIKEDIQSIEKYPYEHHHFQSDRRIMMALQHVAQHKNIAFQSFYNLIDTVYKDQHFTMFETDAELFGYCYGVAGTVGEVLTPILSDHETHQTYDVARRLGESLQLINILRDVGEDFDNERIYFSKQRLKQYEVDIAEVYQNGVNNHYIDLWEYYAAIAEKDFQDVMDQIKVFSIEAQPIIELAARIYIEILDEVRQANYTLHERVFVDKRKKAKLFHEINSKYHRI</sequence>
<dbReference type="EC" id="2.5.1.96" evidence="2"/>
<dbReference type="EMBL" id="BA000033">
    <property type="protein sequence ID" value="BAB96348.1"/>
    <property type="molecule type" value="Genomic_DNA"/>
</dbReference>
<dbReference type="RefSeq" id="WP_000178307.1">
    <property type="nucleotide sequence ID" value="NC_003923.1"/>
</dbReference>
<dbReference type="SMR" id="Q8NUQ5"/>
<dbReference type="KEGG" id="sam:MW2483"/>
<dbReference type="HOGENOM" id="CLU_037269_1_3_9"/>
<dbReference type="UniPathway" id="UPA00029">
    <property type="reaction ID" value="UER00556"/>
</dbReference>
<dbReference type="GO" id="GO:0004311">
    <property type="term" value="F:geranylgeranyl diphosphate synthase activity"/>
    <property type="evidence" value="ECO:0007669"/>
    <property type="project" value="InterPro"/>
</dbReference>
<dbReference type="GO" id="GO:0046872">
    <property type="term" value="F:metal ion binding"/>
    <property type="evidence" value="ECO:0007669"/>
    <property type="project" value="UniProtKB-KW"/>
</dbReference>
<dbReference type="GO" id="GO:0051996">
    <property type="term" value="F:squalene synthase [NAD(P)H] activity"/>
    <property type="evidence" value="ECO:0007669"/>
    <property type="project" value="InterPro"/>
</dbReference>
<dbReference type="GO" id="GO:0016117">
    <property type="term" value="P:carotenoid biosynthetic process"/>
    <property type="evidence" value="ECO:0007669"/>
    <property type="project" value="UniProtKB-KW"/>
</dbReference>
<dbReference type="CDD" id="cd00683">
    <property type="entry name" value="Trans_IPPS_HH"/>
    <property type="match status" value="1"/>
</dbReference>
<dbReference type="FunFam" id="1.10.600.10:FF:000028">
    <property type="entry name" value="Dehydrosqualene synthase"/>
    <property type="match status" value="1"/>
</dbReference>
<dbReference type="Gene3D" id="1.10.600.10">
    <property type="entry name" value="Farnesyl Diphosphate Synthase"/>
    <property type="match status" value="1"/>
</dbReference>
<dbReference type="InterPro" id="IPR008949">
    <property type="entry name" value="Isoprenoid_synthase_dom_sf"/>
</dbReference>
<dbReference type="InterPro" id="IPR002060">
    <property type="entry name" value="Squ/phyt_synthse"/>
</dbReference>
<dbReference type="InterPro" id="IPR019845">
    <property type="entry name" value="Squalene/phytoene_synthase_CS"/>
</dbReference>
<dbReference type="InterPro" id="IPR044843">
    <property type="entry name" value="Trans_IPPS_bact-type"/>
</dbReference>
<dbReference type="InterPro" id="IPR033904">
    <property type="entry name" value="Trans_IPPS_HH"/>
</dbReference>
<dbReference type="PANTHER" id="PTHR31480">
    <property type="entry name" value="BIFUNCTIONAL LYCOPENE CYCLASE/PHYTOENE SYNTHASE"/>
    <property type="match status" value="1"/>
</dbReference>
<dbReference type="Pfam" id="PF00494">
    <property type="entry name" value="SQS_PSY"/>
    <property type="match status" value="1"/>
</dbReference>
<dbReference type="SFLD" id="SFLDG01212">
    <property type="entry name" value="Phytoene_synthase_like"/>
    <property type="match status" value="1"/>
</dbReference>
<dbReference type="SFLD" id="SFLDG01018">
    <property type="entry name" value="Squalene/Phytoene_Synthase_Lik"/>
    <property type="match status" value="1"/>
</dbReference>
<dbReference type="SUPFAM" id="SSF48576">
    <property type="entry name" value="Terpenoid synthases"/>
    <property type="match status" value="1"/>
</dbReference>
<dbReference type="PROSITE" id="PS01044">
    <property type="entry name" value="SQUALEN_PHYTOEN_SYN_1"/>
    <property type="match status" value="1"/>
</dbReference>
<organism>
    <name type="scientific">Staphylococcus aureus (strain MW2)</name>
    <dbReference type="NCBI Taxonomy" id="196620"/>
    <lineage>
        <taxon>Bacteria</taxon>
        <taxon>Bacillati</taxon>
        <taxon>Bacillota</taxon>
        <taxon>Bacilli</taxon>
        <taxon>Bacillales</taxon>
        <taxon>Staphylococcaceae</taxon>
        <taxon>Staphylococcus</taxon>
    </lineage>
</organism>
<evidence type="ECO:0000250" key="1">
    <source>
        <dbReference type="UniProtKB" id="A9JQL9"/>
    </source>
</evidence>
<evidence type="ECO:0000250" key="2">
    <source>
        <dbReference type="UniProtKB" id="Q2FV59"/>
    </source>
</evidence>
<evidence type="ECO:0000305" key="3"/>